<dbReference type="EC" id="2.5.1.141" evidence="1"/>
<dbReference type="EMBL" id="AJ749949">
    <property type="protein sequence ID" value="CAG44918.1"/>
    <property type="molecule type" value="Genomic_DNA"/>
</dbReference>
<dbReference type="RefSeq" id="WP_003021678.1">
    <property type="nucleotide sequence ID" value="NC_006570.2"/>
</dbReference>
<dbReference type="RefSeq" id="YP_169335.1">
    <property type="nucleotide sequence ID" value="NC_006570.2"/>
</dbReference>
<dbReference type="SMR" id="Q5NI07"/>
<dbReference type="STRING" id="177416.FTT_0285"/>
<dbReference type="DNASU" id="3192388"/>
<dbReference type="EnsemblBacteria" id="CAG44918">
    <property type="protein sequence ID" value="CAG44918"/>
    <property type="gene ID" value="FTT_0285"/>
</dbReference>
<dbReference type="KEGG" id="ftu:FTT_0285"/>
<dbReference type="eggNOG" id="COG0109">
    <property type="taxonomic scope" value="Bacteria"/>
</dbReference>
<dbReference type="OrthoDB" id="9814417at2"/>
<dbReference type="UniPathway" id="UPA00834">
    <property type="reaction ID" value="UER00712"/>
</dbReference>
<dbReference type="Proteomes" id="UP000001174">
    <property type="component" value="Chromosome"/>
</dbReference>
<dbReference type="GO" id="GO:0005886">
    <property type="term" value="C:plasma membrane"/>
    <property type="evidence" value="ECO:0007669"/>
    <property type="project" value="UniProtKB-SubCell"/>
</dbReference>
<dbReference type="GO" id="GO:0008495">
    <property type="term" value="F:protoheme IX farnesyltransferase activity"/>
    <property type="evidence" value="ECO:0007669"/>
    <property type="project" value="UniProtKB-UniRule"/>
</dbReference>
<dbReference type="GO" id="GO:0048034">
    <property type="term" value="P:heme O biosynthetic process"/>
    <property type="evidence" value="ECO:0007669"/>
    <property type="project" value="UniProtKB-UniRule"/>
</dbReference>
<dbReference type="CDD" id="cd13957">
    <property type="entry name" value="PT_UbiA_Cox10"/>
    <property type="match status" value="1"/>
</dbReference>
<dbReference type="Gene3D" id="1.10.357.140">
    <property type="entry name" value="UbiA prenyltransferase"/>
    <property type="match status" value="1"/>
</dbReference>
<dbReference type="HAMAP" id="MF_00154">
    <property type="entry name" value="CyoE_CtaB"/>
    <property type="match status" value="1"/>
</dbReference>
<dbReference type="InterPro" id="IPR006369">
    <property type="entry name" value="Protohaem_IX_farnesylTrfase"/>
</dbReference>
<dbReference type="InterPro" id="IPR000537">
    <property type="entry name" value="UbiA_prenyltransferase"/>
</dbReference>
<dbReference type="InterPro" id="IPR030470">
    <property type="entry name" value="UbiA_prenylTrfase_CS"/>
</dbReference>
<dbReference type="InterPro" id="IPR044878">
    <property type="entry name" value="UbiA_sf"/>
</dbReference>
<dbReference type="NCBIfam" id="TIGR01473">
    <property type="entry name" value="cyoE_ctaB"/>
    <property type="match status" value="1"/>
</dbReference>
<dbReference type="NCBIfam" id="NF003348">
    <property type="entry name" value="PRK04375.1-1"/>
    <property type="match status" value="1"/>
</dbReference>
<dbReference type="PANTHER" id="PTHR43448">
    <property type="entry name" value="PROTOHEME IX FARNESYLTRANSFERASE, MITOCHONDRIAL"/>
    <property type="match status" value="1"/>
</dbReference>
<dbReference type="PANTHER" id="PTHR43448:SF2">
    <property type="entry name" value="PROTOHEME IX FARNESYLTRANSFERASE, MITOCHONDRIAL"/>
    <property type="match status" value="1"/>
</dbReference>
<dbReference type="Pfam" id="PF01040">
    <property type="entry name" value="UbiA"/>
    <property type="match status" value="1"/>
</dbReference>
<dbReference type="PROSITE" id="PS00943">
    <property type="entry name" value="UBIA"/>
    <property type="match status" value="1"/>
</dbReference>
<feature type="chain" id="PRO_0000326899" description="Protoheme IX farnesyltransferase">
    <location>
        <begin position="1"/>
        <end position="282"/>
    </location>
</feature>
<feature type="transmembrane region" description="Helical" evidence="1">
    <location>
        <begin position="9"/>
        <end position="29"/>
    </location>
</feature>
<feature type="transmembrane region" description="Helical" evidence="1">
    <location>
        <begin position="39"/>
        <end position="59"/>
    </location>
</feature>
<feature type="transmembrane region" description="Helical" evidence="1">
    <location>
        <begin position="79"/>
        <end position="99"/>
    </location>
</feature>
<feature type="transmembrane region" description="Helical" evidence="1">
    <location>
        <begin position="102"/>
        <end position="122"/>
    </location>
</feature>
<feature type="transmembrane region" description="Helical" evidence="1">
    <location>
        <begin position="139"/>
        <end position="159"/>
    </location>
</feature>
<feature type="transmembrane region" description="Helical" evidence="1">
    <location>
        <begin position="165"/>
        <end position="185"/>
    </location>
</feature>
<feature type="transmembrane region" description="Helical" evidence="1">
    <location>
        <begin position="210"/>
        <end position="230"/>
    </location>
</feature>
<feature type="transmembrane region" description="Helical" evidence="1">
    <location>
        <begin position="231"/>
        <end position="251"/>
    </location>
</feature>
<feature type="transmembrane region" description="Helical" evidence="1">
    <location>
        <begin position="261"/>
        <end position="281"/>
    </location>
</feature>
<proteinExistence type="inferred from homology"/>
<protein>
    <recommendedName>
        <fullName evidence="1">Protoheme IX farnesyltransferase</fullName>
        <ecNumber evidence="1">2.5.1.141</ecNumber>
    </recommendedName>
    <alternativeName>
        <fullName evidence="1">Heme B farnesyltransferase</fullName>
    </alternativeName>
    <alternativeName>
        <fullName evidence="1">Heme O synthase</fullName>
    </alternativeName>
</protein>
<name>CYOE_FRATT</name>
<comment type="function">
    <text evidence="1">Converts heme B (protoheme IX) to heme O by substitution of the vinyl group on carbon 2 of heme B porphyrin ring with a hydroxyethyl farnesyl side group.</text>
</comment>
<comment type="catalytic activity">
    <reaction evidence="1">
        <text>heme b + (2E,6E)-farnesyl diphosphate + H2O = Fe(II)-heme o + diphosphate</text>
        <dbReference type="Rhea" id="RHEA:28070"/>
        <dbReference type="ChEBI" id="CHEBI:15377"/>
        <dbReference type="ChEBI" id="CHEBI:33019"/>
        <dbReference type="ChEBI" id="CHEBI:60344"/>
        <dbReference type="ChEBI" id="CHEBI:60530"/>
        <dbReference type="ChEBI" id="CHEBI:175763"/>
        <dbReference type="EC" id="2.5.1.141"/>
    </reaction>
</comment>
<comment type="pathway">
    <text evidence="1">Porphyrin-containing compound metabolism; heme O biosynthesis; heme O from protoheme: step 1/1.</text>
</comment>
<comment type="subcellular location">
    <subcellularLocation>
        <location evidence="1">Cell inner membrane</location>
        <topology evidence="1">Multi-pass membrane protein</topology>
    </subcellularLocation>
</comment>
<comment type="miscellaneous">
    <text evidence="1">Carbon 2 of the heme B porphyrin ring is defined according to the Fischer nomenclature.</text>
</comment>
<comment type="similarity">
    <text evidence="1">Belongs to the UbiA prenyltransferase family. Protoheme IX farnesyltransferase subfamily.</text>
</comment>
<keyword id="KW-0997">Cell inner membrane</keyword>
<keyword id="KW-1003">Cell membrane</keyword>
<keyword id="KW-0350">Heme biosynthesis</keyword>
<keyword id="KW-0472">Membrane</keyword>
<keyword id="KW-1185">Reference proteome</keyword>
<keyword id="KW-0808">Transferase</keyword>
<keyword id="KW-0812">Transmembrane</keyword>
<keyword id="KW-1133">Transmembrane helix</keyword>
<gene>
    <name evidence="1" type="primary">cyoE</name>
    <name type="ordered locus">FTT_0285</name>
</gene>
<organism>
    <name type="scientific">Francisella tularensis subsp. tularensis (strain SCHU S4 / Schu 4)</name>
    <dbReference type="NCBI Taxonomy" id="177416"/>
    <lineage>
        <taxon>Bacteria</taxon>
        <taxon>Pseudomonadati</taxon>
        <taxon>Pseudomonadota</taxon>
        <taxon>Gammaproteobacteria</taxon>
        <taxon>Thiotrichales</taxon>
        <taxon>Francisellaceae</taxon>
        <taxon>Francisella</taxon>
    </lineage>
</organism>
<reference key="1">
    <citation type="journal article" date="2005" name="Nat. Genet.">
        <title>The complete genome sequence of Francisella tularensis, the causative agent of tularemia.</title>
        <authorList>
            <person name="Larsson P."/>
            <person name="Oyston P.C.F."/>
            <person name="Chain P."/>
            <person name="Chu M.C."/>
            <person name="Duffield M."/>
            <person name="Fuxelius H.-H."/>
            <person name="Garcia E."/>
            <person name="Haelltorp G."/>
            <person name="Johansson D."/>
            <person name="Isherwood K.E."/>
            <person name="Karp P.D."/>
            <person name="Larsson E."/>
            <person name="Liu Y."/>
            <person name="Michell S."/>
            <person name="Prior J."/>
            <person name="Prior R."/>
            <person name="Malfatti S."/>
            <person name="Sjoestedt A."/>
            <person name="Svensson K."/>
            <person name="Thompson N."/>
            <person name="Vergez L."/>
            <person name="Wagg J.K."/>
            <person name="Wren B.W."/>
            <person name="Lindler L.E."/>
            <person name="Andersson S.G.E."/>
            <person name="Forsman M."/>
            <person name="Titball R.W."/>
        </authorList>
    </citation>
    <scope>NUCLEOTIDE SEQUENCE [LARGE SCALE GENOMIC DNA]</scope>
    <source>
        <strain>SCHU S4 / Schu 4</strain>
    </source>
</reference>
<sequence>MYFKRYLQLAKPGIIFGNLITLTGGFLLATHREIGFEYLPLFVYVMIGVALMIAAGCVFNNIYDKDIDSSMTRTQNRPLVTGDISVIQATIYGTILLILSCLVLYYLVILLTLWIIIIGFIVYVGIYTVSKRLTIHATVLGGISGAIPPVAGYTAVVNILDYNALALFLILFFWQIPHSYAIAMLYIDDYKKVKLPMLPIVKGIAYTKKIMLFYLALFVVSCALPAVLGSADLFSFIVCMLVALFWMYKSIQSYRTDTDRVFAKTVFKFSIIVITVICLTMG</sequence>
<accession>Q5NI07</accession>
<evidence type="ECO:0000255" key="1">
    <source>
        <dbReference type="HAMAP-Rule" id="MF_00154"/>
    </source>
</evidence>